<protein>
    <recommendedName>
        <fullName evidence="1">Elongation factor Ts</fullName>
        <shortName evidence="1">EF-Ts</shortName>
    </recommendedName>
</protein>
<organism>
    <name type="scientific">Psychrobacter sp. (strain PRwf-1)</name>
    <dbReference type="NCBI Taxonomy" id="349106"/>
    <lineage>
        <taxon>Bacteria</taxon>
        <taxon>Pseudomonadati</taxon>
        <taxon>Pseudomonadota</taxon>
        <taxon>Gammaproteobacteria</taxon>
        <taxon>Moraxellales</taxon>
        <taxon>Moraxellaceae</taxon>
        <taxon>Psychrobacter</taxon>
    </lineage>
</organism>
<accession>A5WCX3</accession>
<reference key="1">
    <citation type="submission" date="2007-05" db="EMBL/GenBank/DDBJ databases">
        <title>Complete sequence of chromosome of Psychrobacter sp. PRwf-1.</title>
        <authorList>
            <consortium name="US DOE Joint Genome Institute"/>
            <person name="Copeland A."/>
            <person name="Lucas S."/>
            <person name="Lapidus A."/>
            <person name="Barry K."/>
            <person name="Detter J.C."/>
            <person name="Glavina del Rio T."/>
            <person name="Hammon N."/>
            <person name="Israni S."/>
            <person name="Dalin E."/>
            <person name="Tice H."/>
            <person name="Pitluck S."/>
            <person name="Chain P."/>
            <person name="Malfatti S."/>
            <person name="Shin M."/>
            <person name="Vergez L."/>
            <person name="Schmutz J."/>
            <person name="Larimer F."/>
            <person name="Land M."/>
            <person name="Hauser L."/>
            <person name="Kyrpides N."/>
            <person name="Kim E."/>
            <person name="Tiedje J."/>
            <person name="Richardson P."/>
        </authorList>
    </citation>
    <scope>NUCLEOTIDE SEQUENCE [LARGE SCALE GENOMIC DNA]</scope>
    <source>
        <strain>PRwf-1</strain>
    </source>
</reference>
<feature type="chain" id="PRO_1000071125" description="Elongation factor Ts">
    <location>
        <begin position="1"/>
        <end position="292"/>
    </location>
</feature>
<feature type="region of interest" description="Involved in Mg(2+) ion dislocation from EF-Tu" evidence="1">
    <location>
        <begin position="80"/>
        <end position="83"/>
    </location>
</feature>
<gene>
    <name evidence="1" type="primary">tsf</name>
    <name type="ordered locus">PsycPRwf_0559</name>
</gene>
<comment type="function">
    <text evidence="1">Associates with the EF-Tu.GDP complex and induces the exchange of GDP to GTP. It remains bound to the aminoacyl-tRNA.EF-Tu.GTP complex up to the GTP hydrolysis stage on the ribosome.</text>
</comment>
<comment type="subcellular location">
    <subcellularLocation>
        <location evidence="1">Cytoplasm</location>
    </subcellularLocation>
</comment>
<comment type="similarity">
    <text evidence="1">Belongs to the EF-Ts family.</text>
</comment>
<sequence>MSKISAKLVKELRDRTGLGMMECKKALEETNGDVEQAIDNLRKSGQAKAAKKAGNIAADGAIVIAQEGNKAILLEVNCQTDFVAKDDNFTEFANKVAELALANNTTDVAAISELDYGNGQSVEEARVALVQKIGENIQVRRAKIIEGDNLASYRHGLRIGVVVSSEGGQEDSGKNLAMHIAAFNPVAVNDTDVPADILAREKDIAEAKARESGKPDNIIEKMIEGGLRKYLDEVVLVRQAYVMDNEKKVGDVLKADGVTVKDFVRFEVGEGIEKKQEDFAAEVAAAQAAAAQ</sequence>
<evidence type="ECO:0000255" key="1">
    <source>
        <dbReference type="HAMAP-Rule" id="MF_00050"/>
    </source>
</evidence>
<proteinExistence type="inferred from homology"/>
<dbReference type="EMBL" id="CP000713">
    <property type="protein sequence ID" value="ABQ93514.1"/>
    <property type="molecule type" value="Genomic_DNA"/>
</dbReference>
<dbReference type="SMR" id="A5WCX3"/>
<dbReference type="STRING" id="349106.PsycPRwf_0559"/>
<dbReference type="KEGG" id="prw:PsycPRwf_0559"/>
<dbReference type="eggNOG" id="COG0264">
    <property type="taxonomic scope" value="Bacteria"/>
</dbReference>
<dbReference type="HOGENOM" id="CLU_047155_0_2_6"/>
<dbReference type="GO" id="GO:0005737">
    <property type="term" value="C:cytoplasm"/>
    <property type="evidence" value="ECO:0007669"/>
    <property type="project" value="UniProtKB-SubCell"/>
</dbReference>
<dbReference type="GO" id="GO:0003746">
    <property type="term" value="F:translation elongation factor activity"/>
    <property type="evidence" value="ECO:0007669"/>
    <property type="project" value="UniProtKB-UniRule"/>
</dbReference>
<dbReference type="CDD" id="cd14275">
    <property type="entry name" value="UBA_EF-Ts"/>
    <property type="match status" value="1"/>
</dbReference>
<dbReference type="FunFam" id="1.10.286.20:FF:000001">
    <property type="entry name" value="Elongation factor Ts"/>
    <property type="match status" value="1"/>
</dbReference>
<dbReference type="FunFam" id="1.10.8.10:FF:000001">
    <property type="entry name" value="Elongation factor Ts"/>
    <property type="match status" value="1"/>
</dbReference>
<dbReference type="FunFam" id="3.30.479.20:FF:000001">
    <property type="entry name" value="Elongation factor Ts"/>
    <property type="match status" value="1"/>
</dbReference>
<dbReference type="Gene3D" id="1.10.286.20">
    <property type="match status" value="1"/>
</dbReference>
<dbReference type="Gene3D" id="1.10.8.10">
    <property type="entry name" value="DNA helicase RuvA subunit, C-terminal domain"/>
    <property type="match status" value="1"/>
</dbReference>
<dbReference type="Gene3D" id="3.30.479.20">
    <property type="entry name" value="Elongation factor Ts, dimerisation domain"/>
    <property type="match status" value="2"/>
</dbReference>
<dbReference type="HAMAP" id="MF_00050">
    <property type="entry name" value="EF_Ts"/>
    <property type="match status" value="1"/>
</dbReference>
<dbReference type="InterPro" id="IPR036402">
    <property type="entry name" value="EF-Ts_dimer_sf"/>
</dbReference>
<dbReference type="InterPro" id="IPR001816">
    <property type="entry name" value="Transl_elong_EFTs/EF1B"/>
</dbReference>
<dbReference type="InterPro" id="IPR014039">
    <property type="entry name" value="Transl_elong_EFTs/EF1B_dimer"/>
</dbReference>
<dbReference type="InterPro" id="IPR018101">
    <property type="entry name" value="Transl_elong_Ts_CS"/>
</dbReference>
<dbReference type="InterPro" id="IPR009060">
    <property type="entry name" value="UBA-like_sf"/>
</dbReference>
<dbReference type="NCBIfam" id="TIGR00116">
    <property type="entry name" value="tsf"/>
    <property type="match status" value="1"/>
</dbReference>
<dbReference type="PANTHER" id="PTHR11741">
    <property type="entry name" value="ELONGATION FACTOR TS"/>
    <property type="match status" value="1"/>
</dbReference>
<dbReference type="PANTHER" id="PTHR11741:SF0">
    <property type="entry name" value="ELONGATION FACTOR TS, MITOCHONDRIAL"/>
    <property type="match status" value="1"/>
</dbReference>
<dbReference type="Pfam" id="PF00889">
    <property type="entry name" value="EF_TS"/>
    <property type="match status" value="1"/>
</dbReference>
<dbReference type="SUPFAM" id="SSF54713">
    <property type="entry name" value="Elongation factor Ts (EF-Ts), dimerisation domain"/>
    <property type="match status" value="2"/>
</dbReference>
<dbReference type="SUPFAM" id="SSF46934">
    <property type="entry name" value="UBA-like"/>
    <property type="match status" value="1"/>
</dbReference>
<dbReference type="PROSITE" id="PS01126">
    <property type="entry name" value="EF_TS_1"/>
    <property type="match status" value="1"/>
</dbReference>
<dbReference type="PROSITE" id="PS01127">
    <property type="entry name" value="EF_TS_2"/>
    <property type="match status" value="1"/>
</dbReference>
<keyword id="KW-0963">Cytoplasm</keyword>
<keyword id="KW-0251">Elongation factor</keyword>
<keyword id="KW-0648">Protein biosynthesis</keyword>
<name>EFTS_PSYWF</name>